<organism>
    <name type="scientific">Cronobacter sakazakii (strain ATCC BAA-894)</name>
    <name type="common">Enterobacter sakazakii</name>
    <dbReference type="NCBI Taxonomy" id="290339"/>
    <lineage>
        <taxon>Bacteria</taxon>
        <taxon>Pseudomonadati</taxon>
        <taxon>Pseudomonadota</taxon>
        <taxon>Gammaproteobacteria</taxon>
        <taxon>Enterobacterales</taxon>
        <taxon>Enterobacteriaceae</taxon>
        <taxon>Cronobacter</taxon>
    </lineage>
</organism>
<gene>
    <name evidence="1" type="primary">nfi</name>
    <name type="ordered locus">ESA_03675</name>
</gene>
<name>NFI_CROS8</name>
<accession>A7MJ90</accession>
<protein>
    <recommendedName>
        <fullName evidence="1">Endonuclease V</fullName>
        <ecNumber evidence="1">3.1.21.7</ecNumber>
    </recommendedName>
    <alternativeName>
        <fullName evidence="1">Deoxyinosine 3'endonuclease</fullName>
    </alternativeName>
    <alternativeName>
        <fullName evidence="1">Deoxyribonuclease V</fullName>
        <shortName evidence="1">DNase V</shortName>
    </alternativeName>
</protein>
<sequence>MDLATLRAQQIELASNVVREDRLNVDPPTIIGGADVGFEQGGEVTRAAMVLLKYPSLELLEYQVARIPTTMPYIPGFLSFREYPALLTAWEMLSRKPDLLFVDGHGISHPRRLGVASHFGMLVDVPTIGVAKKRLCGKFEPLSDEPGAVSPLMDKGEQLAWVWRSKARCNPLFVSTGHRVSIDTALGWVQRCTKGYRLPEPTRWADAVASGRPAFLRWQEIQG</sequence>
<evidence type="ECO:0000255" key="1">
    <source>
        <dbReference type="HAMAP-Rule" id="MF_00801"/>
    </source>
</evidence>
<reference key="1">
    <citation type="journal article" date="2010" name="PLoS ONE">
        <title>Genome sequence of Cronobacter sakazakii BAA-894 and comparative genomic hybridization analysis with other Cronobacter species.</title>
        <authorList>
            <person name="Kucerova E."/>
            <person name="Clifton S.W."/>
            <person name="Xia X.Q."/>
            <person name="Long F."/>
            <person name="Porwollik S."/>
            <person name="Fulton L."/>
            <person name="Fronick C."/>
            <person name="Minx P."/>
            <person name="Kyung K."/>
            <person name="Warren W."/>
            <person name="Fulton R."/>
            <person name="Feng D."/>
            <person name="Wollam A."/>
            <person name="Shah N."/>
            <person name="Bhonagiri V."/>
            <person name="Nash W.E."/>
            <person name="Hallsworth-Pepin K."/>
            <person name="Wilson R.K."/>
            <person name="McClelland M."/>
            <person name="Forsythe S.J."/>
        </authorList>
    </citation>
    <scope>NUCLEOTIDE SEQUENCE [LARGE SCALE GENOMIC DNA]</scope>
    <source>
        <strain>ATCC BAA-894</strain>
    </source>
</reference>
<comment type="function">
    <text evidence="1">DNA repair enzyme involved in the repair of deaminated bases. Selectively cleaves double-stranded DNA at the second phosphodiester bond 3' to a deoxyinosine leaving behind the intact lesion on the nicked DNA.</text>
</comment>
<comment type="catalytic activity">
    <reaction evidence="1">
        <text>Endonucleolytic cleavage at apurinic or apyrimidinic sites to products with a 5'-phosphate.</text>
        <dbReference type="EC" id="3.1.21.7"/>
    </reaction>
</comment>
<comment type="cofactor">
    <cofactor evidence="1">
        <name>Mg(2+)</name>
        <dbReference type="ChEBI" id="CHEBI:18420"/>
    </cofactor>
</comment>
<comment type="subcellular location">
    <subcellularLocation>
        <location evidence="1">Cytoplasm</location>
    </subcellularLocation>
</comment>
<comment type="similarity">
    <text evidence="1">Belongs to the endonuclease V family.</text>
</comment>
<proteinExistence type="inferred from homology"/>
<dbReference type="EC" id="3.1.21.7" evidence="1"/>
<dbReference type="EMBL" id="CP000783">
    <property type="protein sequence ID" value="ABU78879.1"/>
    <property type="molecule type" value="Genomic_DNA"/>
</dbReference>
<dbReference type="RefSeq" id="WP_004388100.1">
    <property type="nucleotide sequence ID" value="NC_009778.1"/>
</dbReference>
<dbReference type="SMR" id="A7MJ90"/>
<dbReference type="GeneID" id="56732328"/>
<dbReference type="KEGG" id="esa:ESA_03675"/>
<dbReference type="HOGENOM" id="CLU_047631_1_0_6"/>
<dbReference type="Proteomes" id="UP000000260">
    <property type="component" value="Chromosome"/>
</dbReference>
<dbReference type="GO" id="GO:0005737">
    <property type="term" value="C:cytoplasm"/>
    <property type="evidence" value="ECO:0007669"/>
    <property type="project" value="UniProtKB-SubCell"/>
</dbReference>
<dbReference type="GO" id="GO:0043737">
    <property type="term" value="F:deoxyribonuclease V activity"/>
    <property type="evidence" value="ECO:0007669"/>
    <property type="project" value="UniProtKB-UniRule"/>
</dbReference>
<dbReference type="GO" id="GO:0000287">
    <property type="term" value="F:magnesium ion binding"/>
    <property type="evidence" value="ECO:0007669"/>
    <property type="project" value="UniProtKB-UniRule"/>
</dbReference>
<dbReference type="GO" id="GO:0016891">
    <property type="term" value="F:RNA endonuclease activity, producing 5'-phosphomonoesters"/>
    <property type="evidence" value="ECO:0007669"/>
    <property type="project" value="TreeGrafter"/>
</dbReference>
<dbReference type="GO" id="GO:0003727">
    <property type="term" value="F:single-stranded RNA binding"/>
    <property type="evidence" value="ECO:0007669"/>
    <property type="project" value="TreeGrafter"/>
</dbReference>
<dbReference type="GO" id="GO:0006281">
    <property type="term" value="P:DNA repair"/>
    <property type="evidence" value="ECO:0007669"/>
    <property type="project" value="UniProtKB-UniRule"/>
</dbReference>
<dbReference type="CDD" id="cd06559">
    <property type="entry name" value="Endonuclease_V"/>
    <property type="match status" value="1"/>
</dbReference>
<dbReference type="FunFam" id="3.30.2170.10:FF:000001">
    <property type="entry name" value="Endonuclease V"/>
    <property type="match status" value="1"/>
</dbReference>
<dbReference type="Gene3D" id="3.30.2170.10">
    <property type="entry name" value="archaeoglobus fulgidus dsm 4304 superfamily"/>
    <property type="match status" value="1"/>
</dbReference>
<dbReference type="HAMAP" id="MF_00801">
    <property type="entry name" value="Endonuclease_5"/>
    <property type="match status" value="1"/>
</dbReference>
<dbReference type="InterPro" id="IPR007581">
    <property type="entry name" value="Endonuclease-V"/>
</dbReference>
<dbReference type="NCBIfam" id="NF008629">
    <property type="entry name" value="PRK11617.1"/>
    <property type="match status" value="1"/>
</dbReference>
<dbReference type="PANTHER" id="PTHR28511">
    <property type="entry name" value="ENDONUCLEASE V"/>
    <property type="match status" value="1"/>
</dbReference>
<dbReference type="PANTHER" id="PTHR28511:SF1">
    <property type="entry name" value="ENDONUCLEASE V"/>
    <property type="match status" value="1"/>
</dbReference>
<dbReference type="Pfam" id="PF04493">
    <property type="entry name" value="Endonuclease_5"/>
    <property type="match status" value="1"/>
</dbReference>
<feature type="chain" id="PRO_1000046997" description="Endonuclease V">
    <location>
        <begin position="1"/>
        <end position="223"/>
    </location>
</feature>
<feature type="binding site" evidence="1">
    <location>
        <position position="35"/>
    </location>
    <ligand>
        <name>Mg(2+)</name>
        <dbReference type="ChEBI" id="CHEBI:18420"/>
    </ligand>
</feature>
<feature type="binding site" evidence="1">
    <location>
        <position position="103"/>
    </location>
    <ligand>
        <name>Mg(2+)</name>
        <dbReference type="ChEBI" id="CHEBI:18420"/>
    </ligand>
</feature>
<feature type="site" description="Interaction with target DNA" evidence="1">
    <location>
        <position position="73"/>
    </location>
</feature>
<keyword id="KW-0963">Cytoplasm</keyword>
<keyword id="KW-0227">DNA damage</keyword>
<keyword id="KW-0234">DNA repair</keyword>
<keyword id="KW-0255">Endonuclease</keyword>
<keyword id="KW-0378">Hydrolase</keyword>
<keyword id="KW-0460">Magnesium</keyword>
<keyword id="KW-0479">Metal-binding</keyword>
<keyword id="KW-0540">Nuclease</keyword>
<keyword id="KW-1185">Reference proteome</keyword>